<organism>
    <name type="scientific">Staphylococcus aureus (strain COL)</name>
    <dbReference type="NCBI Taxonomy" id="93062"/>
    <lineage>
        <taxon>Bacteria</taxon>
        <taxon>Bacillati</taxon>
        <taxon>Bacillota</taxon>
        <taxon>Bacilli</taxon>
        <taxon>Bacillales</taxon>
        <taxon>Staphylococcaceae</taxon>
        <taxon>Staphylococcus</taxon>
    </lineage>
</organism>
<keyword id="KW-0050">Antiport</keyword>
<keyword id="KW-1003">Cell membrane</keyword>
<keyword id="KW-0375">Hydrogen ion transport</keyword>
<keyword id="KW-0406">Ion transport</keyword>
<keyword id="KW-0472">Membrane</keyword>
<keyword id="KW-0915">Sodium</keyword>
<keyword id="KW-0739">Sodium transport</keyword>
<keyword id="KW-0812">Transmembrane</keyword>
<keyword id="KW-1133">Transmembrane helix</keyword>
<keyword id="KW-0813">Transport</keyword>
<name>MNHG1_STAAC</name>
<dbReference type="EMBL" id="CP000046">
    <property type="protein sequence ID" value="AAW37917.1"/>
    <property type="molecule type" value="Genomic_DNA"/>
</dbReference>
<dbReference type="RefSeq" id="WP_000590451.1">
    <property type="nucleotide sequence ID" value="NZ_JBGOFO010000002.1"/>
</dbReference>
<dbReference type="SMR" id="Q5HHD9"/>
<dbReference type="GeneID" id="98345267"/>
<dbReference type="KEGG" id="sac:SACOL0949"/>
<dbReference type="HOGENOM" id="CLU_121334_0_3_9"/>
<dbReference type="Proteomes" id="UP000000530">
    <property type="component" value="Chromosome"/>
</dbReference>
<dbReference type="GO" id="GO:0005886">
    <property type="term" value="C:plasma membrane"/>
    <property type="evidence" value="ECO:0007669"/>
    <property type="project" value="UniProtKB-SubCell"/>
</dbReference>
<dbReference type="GO" id="GO:0015385">
    <property type="term" value="F:sodium:proton antiporter activity"/>
    <property type="evidence" value="ECO:0007669"/>
    <property type="project" value="TreeGrafter"/>
</dbReference>
<dbReference type="InterPro" id="IPR005133">
    <property type="entry name" value="PhaG_MnhG_YufB"/>
</dbReference>
<dbReference type="NCBIfam" id="TIGR01300">
    <property type="entry name" value="CPA3_mnhG_phaG"/>
    <property type="match status" value="1"/>
</dbReference>
<dbReference type="NCBIfam" id="NF009237">
    <property type="entry name" value="PRK12587.1"/>
    <property type="match status" value="1"/>
</dbReference>
<dbReference type="NCBIfam" id="NF009314">
    <property type="entry name" value="PRK12674.1-2"/>
    <property type="match status" value="1"/>
</dbReference>
<dbReference type="PANTHER" id="PTHR34703">
    <property type="entry name" value="ANTIPORTER SUBUNIT MNHG2-RELATED"/>
    <property type="match status" value="1"/>
</dbReference>
<dbReference type="PANTHER" id="PTHR34703:SF1">
    <property type="entry name" value="ANTIPORTER SUBUNIT MNHG2-RELATED"/>
    <property type="match status" value="1"/>
</dbReference>
<dbReference type="Pfam" id="PF03334">
    <property type="entry name" value="PhaG_MnhG_YufB"/>
    <property type="match status" value="1"/>
</dbReference>
<gene>
    <name type="primary">mnhG1</name>
    <name type="ordered locus">SACOL0949</name>
</gene>
<sequence length="118" mass="12819">MIKIILISLALIFVIIGALISALAAIGLLRLEDVYSRAHAAGKASTLGAMSLLFGTFLYFIATQGFVNMQLIVAIIFVLITGPLSSHMIMKAAYNIKTPYTKKTKVDEISEDLKDTKL</sequence>
<comment type="function">
    <text evidence="1">Mnh complex is a Na(+)/H(+) antiporter involved in Na(+) excretion.</text>
</comment>
<comment type="subunit">
    <text evidence="1">May form a heterooligomeric complex that consists of seven subunits: mnhA1, mnhB1, mnhC1, mnhD1, mnhE1, mnhF1 and mnhG1.</text>
</comment>
<comment type="subcellular location">
    <subcellularLocation>
        <location evidence="3">Cell membrane</location>
        <topology evidence="3">Multi-pass membrane protein</topology>
    </subcellularLocation>
</comment>
<comment type="similarity">
    <text evidence="3">Belongs to the CPA3 antiporters (TC 2.A.63) subunit G family.</text>
</comment>
<protein>
    <recommendedName>
        <fullName>Na(+)/H(+) antiporter subunit G1</fullName>
    </recommendedName>
    <alternativeName>
        <fullName>Mnh complex subunit G1</fullName>
    </alternativeName>
</protein>
<feature type="chain" id="PRO_0000086856" description="Na(+)/H(+) antiporter subunit G1">
    <location>
        <begin position="1"/>
        <end position="118"/>
    </location>
</feature>
<feature type="transmembrane region" description="Helical" evidence="2">
    <location>
        <begin position="7"/>
        <end position="29"/>
    </location>
</feature>
<feature type="transmembrane region" description="Helical" evidence="2">
    <location>
        <begin position="44"/>
        <end position="66"/>
    </location>
</feature>
<feature type="transmembrane region" description="Helical" evidence="2">
    <location>
        <begin position="71"/>
        <end position="90"/>
    </location>
</feature>
<reference key="1">
    <citation type="journal article" date="2005" name="J. Bacteriol.">
        <title>Insights on evolution of virulence and resistance from the complete genome analysis of an early methicillin-resistant Staphylococcus aureus strain and a biofilm-producing methicillin-resistant Staphylococcus epidermidis strain.</title>
        <authorList>
            <person name="Gill S.R."/>
            <person name="Fouts D.E."/>
            <person name="Archer G.L."/>
            <person name="Mongodin E.F."/>
            <person name="DeBoy R.T."/>
            <person name="Ravel J."/>
            <person name="Paulsen I.T."/>
            <person name="Kolonay J.F."/>
            <person name="Brinkac L.M."/>
            <person name="Beanan M.J."/>
            <person name="Dodson R.J."/>
            <person name="Daugherty S.C."/>
            <person name="Madupu R."/>
            <person name="Angiuoli S.V."/>
            <person name="Durkin A.S."/>
            <person name="Haft D.H."/>
            <person name="Vamathevan J.J."/>
            <person name="Khouri H."/>
            <person name="Utterback T.R."/>
            <person name="Lee C."/>
            <person name="Dimitrov G."/>
            <person name="Jiang L."/>
            <person name="Qin H."/>
            <person name="Weidman J."/>
            <person name="Tran K."/>
            <person name="Kang K.H."/>
            <person name="Hance I.R."/>
            <person name="Nelson K.E."/>
            <person name="Fraser C.M."/>
        </authorList>
    </citation>
    <scope>NUCLEOTIDE SEQUENCE [LARGE SCALE GENOMIC DNA]</scope>
    <source>
        <strain>COL</strain>
    </source>
</reference>
<accession>Q5HHD9</accession>
<evidence type="ECO:0000250" key="1"/>
<evidence type="ECO:0000255" key="2"/>
<evidence type="ECO:0000305" key="3"/>
<proteinExistence type="inferred from homology"/>